<feature type="chain" id="PRO_0000118921" description="Exocyst complex component 2">
    <location>
        <begin position="1"/>
        <end position="884"/>
    </location>
</feature>
<feature type="domain" description="IPT/TIG">
    <location>
        <begin position="13"/>
        <end position="98"/>
    </location>
</feature>
<feature type="region of interest" description="Disordered" evidence="4">
    <location>
        <begin position="1"/>
        <end position="27"/>
    </location>
</feature>
<feature type="coiled-coil region" evidence="3">
    <location>
        <begin position="178"/>
        <end position="206"/>
    </location>
</feature>
<feature type="coiled-coil region" evidence="3">
    <location>
        <begin position="846"/>
        <end position="874"/>
    </location>
</feature>
<feature type="compositionally biased region" description="Basic and acidic residues" evidence="4">
    <location>
        <begin position="1"/>
        <end position="11"/>
    </location>
</feature>
<sequence length="884" mass="100414">MEENAQARERLPPTVTGLSPTEGVPGTQITIRGENLGNDQSDVIMLFICGIDSLWSMKWKSPSKIIARVGAASRGPGEVRIATKSGGKGSSNVKFRVFITQIGPLEESAVWVDETRTVPGREAIRSVPQIQDERDALGLLPSQKRMDQVLLSRDFPDCSGNLRMENFSPQWYLLENHADATIEDLRIAIKNMELSKQNEAKRSEEMHKANLYSLINCVDTLANLHQALEKGENADHFAALKNISKLIKDSKSKAENVFADVLKRKDDADATRNALGVIVRFKFIFFLSSKIEDSMKKGEYITILNDYTRAKSLYADTDVPLFRELMTEIDEKMQVFKEEMKRKLIDTPVSYEEQSKLIKYLKILDPESDPTWDCITSYYVWLEKSLWDMQTQFLEKAKLEDLENQQRINSQNHLITKTNELQNFVTTLVELLLSKLPSFWKLANTYHNSTASPDAIQRLEDINQMLTNIINVSSWLILNALVPKALPDMVLKQYGDQFAKWPTVPADISRSNLQLSLKTTRSLISSLLENQFSLTHVQPLVELCMTARLKLLSDFVDCGVERVALLAHRINWKQDILDRAQQTKTILPDYYENEICECLTRTRDALSISGYPGEACLFSRERFRDTIIDLFVHLITSIKICFDRLFIRQRPQQLAQEPGQKKGNNEITTKKLLIAVGDIEFIIAKTLNNVGKKMQECGVKHVDQIQEKSRAKLSAFRTKMINDCIAMMSSAFEPLIASATYEYLPDDDDISDYAKEMILCSVLQQAELELYAPQLAIECLQQTVSNALDALLLHFSRLNQDTSPLIVTQIVIDLTGLEEALSTYATLAIRVQINTYRAGLVGRFDNQRLQQCLKNMRTTMRMALQSLEQHAENLGDDSHNTSNI</sequence>
<name>EXOC2_CAEEL</name>
<proteinExistence type="inferred from homology"/>
<comment type="function">
    <text evidence="2">Component of the exocyst complex involved in the docking of exocytic vesicles with fusion sites on the plasma membrane.</text>
</comment>
<comment type="subunit">
    <text evidence="1">The exocyst complex is composed of sec-3/exoc1, sec-5/exoc2, sec-6/exoc3, sec-8/exoc4, sec-10/exoc5, sec-15/exoc6, exo-70/exoc7 and exo-84/exoc8.</text>
</comment>
<comment type="similarity">
    <text evidence="5">Belongs to the SEC5 family.</text>
</comment>
<keyword id="KW-0175">Coiled coil</keyword>
<keyword id="KW-0268">Exocytosis</keyword>
<keyword id="KW-0653">Protein transport</keyword>
<keyword id="KW-1185">Reference proteome</keyword>
<keyword id="KW-0813">Transport</keyword>
<accession>Q22706</accession>
<organism>
    <name type="scientific">Caenorhabditis elegans</name>
    <dbReference type="NCBI Taxonomy" id="6239"/>
    <lineage>
        <taxon>Eukaryota</taxon>
        <taxon>Metazoa</taxon>
        <taxon>Ecdysozoa</taxon>
        <taxon>Nematoda</taxon>
        <taxon>Chromadorea</taxon>
        <taxon>Rhabditida</taxon>
        <taxon>Rhabditina</taxon>
        <taxon>Rhabditomorpha</taxon>
        <taxon>Rhabditoidea</taxon>
        <taxon>Rhabditidae</taxon>
        <taxon>Peloderinae</taxon>
        <taxon>Caenorhabditis</taxon>
    </lineage>
</organism>
<evidence type="ECO:0000250" key="1">
    <source>
        <dbReference type="UniProtKB" id="O54921"/>
    </source>
</evidence>
<evidence type="ECO:0000250" key="2">
    <source>
        <dbReference type="UniProtKB" id="Q96KP1"/>
    </source>
</evidence>
<evidence type="ECO:0000255" key="3"/>
<evidence type="ECO:0000256" key="4">
    <source>
        <dbReference type="SAM" id="MobiDB-lite"/>
    </source>
</evidence>
<evidence type="ECO:0000305" key="5"/>
<protein>
    <recommendedName>
        <fullName>Exocyst complex component 2</fullName>
    </recommendedName>
    <alternativeName>
        <fullName>Exocyst complex component Sec5</fullName>
    </alternativeName>
</protein>
<reference key="1">
    <citation type="journal article" date="1998" name="Science">
        <title>Genome sequence of the nematode C. elegans: a platform for investigating biology.</title>
        <authorList>
            <consortium name="The C. elegans sequencing consortium"/>
        </authorList>
    </citation>
    <scope>NUCLEOTIDE SEQUENCE [LARGE SCALE GENOMIC DNA]</scope>
    <source>
        <strain>Bristol N2</strain>
    </source>
</reference>
<gene>
    <name type="primary">sec-5</name>
    <name type="ORF">T23G7.4</name>
</gene>
<dbReference type="EMBL" id="Z68319">
    <property type="protein sequence ID" value="CAA92702.1"/>
    <property type="molecule type" value="Genomic_DNA"/>
</dbReference>
<dbReference type="PIR" id="T25205">
    <property type="entry name" value="T25205"/>
</dbReference>
<dbReference type="RefSeq" id="NP_495958.1">
    <property type="nucleotide sequence ID" value="NM_063557.7"/>
</dbReference>
<dbReference type="SMR" id="Q22706"/>
<dbReference type="ComplexPortal" id="CPX-712">
    <property type="entry name" value="Exocyst"/>
</dbReference>
<dbReference type="FunCoup" id="Q22706">
    <property type="interactions" value="2834"/>
</dbReference>
<dbReference type="STRING" id="6239.T23G7.4.1"/>
<dbReference type="PaxDb" id="6239-T23G7.4"/>
<dbReference type="PeptideAtlas" id="Q22706"/>
<dbReference type="EnsemblMetazoa" id="T23G7.4.1">
    <property type="protein sequence ID" value="T23G7.4.1"/>
    <property type="gene ID" value="WBGene00004752"/>
</dbReference>
<dbReference type="GeneID" id="174459"/>
<dbReference type="KEGG" id="cel:CELE_T23G7.4"/>
<dbReference type="UCSC" id="T23G7.4">
    <property type="organism name" value="c. elegans"/>
</dbReference>
<dbReference type="AGR" id="WB:WBGene00004752"/>
<dbReference type="CTD" id="174459"/>
<dbReference type="WormBase" id="T23G7.4">
    <property type="protein sequence ID" value="CE03705"/>
    <property type="gene ID" value="WBGene00004752"/>
    <property type="gene designation" value="sec-5"/>
</dbReference>
<dbReference type="eggNOG" id="KOG2347">
    <property type="taxonomic scope" value="Eukaryota"/>
</dbReference>
<dbReference type="GeneTree" id="ENSGT00390000010872"/>
<dbReference type="HOGENOM" id="CLU_005811_1_0_1"/>
<dbReference type="InParanoid" id="Q22706"/>
<dbReference type="OMA" id="MSAKWKS"/>
<dbReference type="OrthoDB" id="26242at2759"/>
<dbReference type="PhylomeDB" id="Q22706"/>
<dbReference type="Reactome" id="R-CEL-264876">
    <property type="pathway name" value="Insulin processing"/>
</dbReference>
<dbReference type="Reactome" id="R-CEL-5620916">
    <property type="pathway name" value="VxPx cargo-targeting to cilium"/>
</dbReference>
<dbReference type="PRO" id="PR:Q22706"/>
<dbReference type="Proteomes" id="UP000001940">
    <property type="component" value="Chromosome II"/>
</dbReference>
<dbReference type="Bgee" id="WBGene00004752">
    <property type="expression patterns" value="Expressed in pharyngeal muscle cell (C elegans) and 4 other cell types or tissues"/>
</dbReference>
<dbReference type="GO" id="GO:0000145">
    <property type="term" value="C:exocyst"/>
    <property type="evidence" value="ECO:0000250"/>
    <property type="project" value="WormBase"/>
</dbReference>
<dbReference type="GO" id="GO:0006887">
    <property type="term" value="P:exocytosis"/>
    <property type="evidence" value="ECO:0000318"/>
    <property type="project" value="GO_Central"/>
</dbReference>
<dbReference type="GO" id="GO:0006893">
    <property type="term" value="P:Golgi to plasma membrane transport"/>
    <property type="evidence" value="ECO:0000318"/>
    <property type="project" value="GO_Central"/>
</dbReference>
<dbReference type="GO" id="GO:0015031">
    <property type="term" value="P:protein transport"/>
    <property type="evidence" value="ECO:0007669"/>
    <property type="project" value="UniProtKB-KW"/>
</dbReference>
<dbReference type="GO" id="GO:0090522">
    <property type="term" value="P:vesicle tethering involved in exocytosis"/>
    <property type="evidence" value="ECO:0000315"/>
    <property type="project" value="ComplexPortal"/>
</dbReference>
<dbReference type="CDD" id="cd00603">
    <property type="entry name" value="IPT_PCSR"/>
    <property type="match status" value="1"/>
</dbReference>
<dbReference type="FunFam" id="2.60.40.10:FF:002488">
    <property type="entry name" value="Exocyst complex component 2"/>
    <property type="match status" value="1"/>
</dbReference>
<dbReference type="Gene3D" id="2.60.40.10">
    <property type="entry name" value="Immunoglobulins"/>
    <property type="match status" value="1"/>
</dbReference>
<dbReference type="InterPro" id="IPR029175">
    <property type="entry name" value="EXOC2/Sec5"/>
</dbReference>
<dbReference type="InterPro" id="IPR039481">
    <property type="entry name" value="EXOC2/Sec5_N_dom"/>
</dbReference>
<dbReference type="InterPro" id="IPR013783">
    <property type="entry name" value="Ig-like_fold"/>
</dbReference>
<dbReference type="InterPro" id="IPR014756">
    <property type="entry name" value="Ig_E-set"/>
</dbReference>
<dbReference type="InterPro" id="IPR002909">
    <property type="entry name" value="IPT_dom"/>
</dbReference>
<dbReference type="PANTHER" id="PTHR13043:SF1">
    <property type="entry name" value="EXOCYST COMPLEX COMPONENT 2"/>
    <property type="match status" value="1"/>
</dbReference>
<dbReference type="PANTHER" id="PTHR13043">
    <property type="entry name" value="EXOCYST COMPLEX COMPONENT SEC5"/>
    <property type="match status" value="1"/>
</dbReference>
<dbReference type="Pfam" id="PF15469">
    <property type="entry name" value="Sec5"/>
    <property type="match status" value="1"/>
</dbReference>
<dbReference type="Pfam" id="PF01833">
    <property type="entry name" value="TIG"/>
    <property type="match status" value="1"/>
</dbReference>
<dbReference type="SUPFAM" id="SSF81296">
    <property type="entry name" value="E set domains"/>
    <property type="match status" value="1"/>
</dbReference>